<organism>
    <name type="scientific">Bacillus subtilis (strain 168)</name>
    <dbReference type="NCBI Taxonomy" id="224308"/>
    <lineage>
        <taxon>Bacteria</taxon>
        <taxon>Bacillati</taxon>
        <taxon>Bacillota</taxon>
        <taxon>Bacilli</taxon>
        <taxon>Bacillales</taxon>
        <taxon>Bacillaceae</taxon>
        <taxon>Bacillus</taxon>
    </lineage>
</organism>
<comment type="function">
    <text evidence="2">Catalyzes the CoA-dependent transfer of an acetyl group to maltose and other sugars. Acetylates glucose exclusively at the C6 position and maltose at the C6 position of the non-reducing end glucosyl moiety. Is able to acetylate maltooligosaccharides.</text>
</comment>
<comment type="catalytic activity">
    <reaction evidence="2">
        <text>D-maltose + acetyl-CoA = 1-O-acetylmaltose + CoA</text>
        <dbReference type="Rhea" id="RHEA:10456"/>
        <dbReference type="ChEBI" id="CHEBI:13714"/>
        <dbReference type="ChEBI" id="CHEBI:17306"/>
        <dbReference type="ChEBI" id="CHEBI:57287"/>
        <dbReference type="ChEBI" id="CHEBI:57288"/>
        <dbReference type="EC" id="2.3.1.79"/>
    </reaction>
</comment>
<comment type="subunit">
    <text evidence="2">Homodimer.</text>
</comment>
<comment type="similarity">
    <text evidence="3">Belongs to the transferase hexapeptide repeat family.</text>
</comment>
<sequence>MLRTEKEKMAAGELYNSEDQQLLLERKHARQLIRQYNETPEDDAVRTKLLKELLGSVGDQVTILPTFRCDYGYHIHIGDHTFVNFDCVILDVCEVRIGCHCLIAPGVHIYTAGHPLDPIERKSGKEFGKPVTIGDQVWIGGRAVINPGVTIGDNAVIASGSVVTKDVPANTVVGGNPARILKQL</sequence>
<reference key="1">
    <citation type="journal article" date="1994" name="DNA Res.">
        <title>Systematic sequencing of the 180 kilobase region of the Bacillus subtilis chromosome containing the replication origin.</title>
        <authorList>
            <person name="Ogasawara N."/>
            <person name="Nakai S."/>
            <person name="Yoshikawa H."/>
        </authorList>
    </citation>
    <scope>NUCLEOTIDE SEQUENCE [GENOMIC DNA]</scope>
    <source>
        <strain>168</strain>
    </source>
</reference>
<reference key="2">
    <citation type="journal article" date="1994" name="Biochim. Biophys. Acta">
        <title>Isolation of Tn917 insertional mutants of Bacillus subtilis that are resistant to the protonophore carbonyl cyanide m-chlorophenylhydrazone.</title>
        <authorList>
            <person name="Quirk P.G."/>
            <person name="Guffanti A.A."/>
            <person name="Clejan S."/>
            <person name="Cheng J."/>
            <person name="Krulwich T.A."/>
        </authorList>
    </citation>
    <scope>NUCLEOTIDE SEQUENCE [GENOMIC DNA]</scope>
    <source>
        <strain>BD99</strain>
    </source>
</reference>
<reference key="3">
    <citation type="journal article" date="1997" name="Nature">
        <title>The complete genome sequence of the Gram-positive bacterium Bacillus subtilis.</title>
        <authorList>
            <person name="Kunst F."/>
            <person name="Ogasawara N."/>
            <person name="Moszer I."/>
            <person name="Albertini A.M."/>
            <person name="Alloni G."/>
            <person name="Azevedo V."/>
            <person name="Bertero M.G."/>
            <person name="Bessieres P."/>
            <person name="Bolotin A."/>
            <person name="Borchert S."/>
            <person name="Borriss R."/>
            <person name="Boursier L."/>
            <person name="Brans A."/>
            <person name="Braun M."/>
            <person name="Brignell S.C."/>
            <person name="Bron S."/>
            <person name="Brouillet S."/>
            <person name="Bruschi C.V."/>
            <person name="Caldwell B."/>
            <person name="Capuano V."/>
            <person name="Carter N.M."/>
            <person name="Choi S.-K."/>
            <person name="Codani J.-J."/>
            <person name="Connerton I.F."/>
            <person name="Cummings N.J."/>
            <person name="Daniel R.A."/>
            <person name="Denizot F."/>
            <person name="Devine K.M."/>
            <person name="Duesterhoeft A."/>
            <person name="Ehrlich S.D."/>
            <person name="Emmerson P.T."/>
            <person name="Entian K.-D."/>
            <person name="Errington J."/>
            <person name="Fabret C."/>
            <person name="Ferrari E."/>
            <person name="Foulger D."/>
            <person name="Fritz C."/>
            <person name="Fujita M."/>
            <person name="Fujita Y."/>
            <person name="Fuma S."/>
            <person name="Galizzi A."/>
            <person name="Galleron N."/>
            <person name="Ghim S.-Y."/>
            <person name="Glaser P."/>
            <person name="Goffeau A."/>
            <person name="Golightly E.J."/>
            <person name="Grandi G."/>
            <person name="Guiseppi G."/>
            <person name="Guy B.J."/>
            <person name="Haga K."/>
            <person name="Haiech J."/>
            <person name="Harwood C.R."/>
            <person name="Henaut A."/>
            <person name="Hilbert H."/>
            <person name="Holsappel S."/>
            <person name="Hosono S."/>
            <person name="Hullo M.-F."/>
            <person name="Itaya M."/>
            <person name="Jones L.-M."/>
            <person name="Joris B."/>
            <person name="Karamata D."/>
            <person name="Kasahara Y."/>
            <person name="Klaerr-Blanchard M."/>
            <person name="Klein C."/>
            <person name="Kobayashi Y."/>
            <person name="Koetter P."/>
            <person name="Koningstein G."/>
            <person name="Krogh S."/>
            <person name="Kumano M."/>
            <person name="Kurita K."/>
            <person name="Lapidus A."/>
            <person name="Lardinois S."/>
            <person name="Lauber J."/>
            <person name="Lazarevic V."/>
            <person name="Lee S.-M."/>
            <person name="Levine A."/>
            <person name="Liu H."/>
            <person name="Masuda S."/>
            <person name="Mauel C."/>
            <person name="Medigue C."/>
            <person name="Medina N."/>
            <person name="Mellado R.P."/>
            <person name="Mizuno M."/>
            <person name="Moestl D."/>
            <person name="Nakai S."/>
            <person name="Noback M."/>
            <person name="Noone D."/>
            <person name="O'Reilly M."/>
            <person name="Ogawa K."/>
            <person name="Ogiwara A."/>
            <person name="Oudega B."/>
            <person name="Park S.-H."/>
            <person name="Parro V."/>
            <person name="Pohl T.M."/>
            <person name="Portetelle D."/>
            <person name="Porwollik S."/>
            <person name="Prescott A.M."/>
            <person name="Presecan E."/>
            <person name="Pujic P."/>
            <person name="Purnelle B."/>
            <person name="Rapoport G."/>
            <person name="Rey M."/>
            <person name="Reynolds S."/>
            <person name="Rieger M."/>
            <person name="Rivolta C."/>
            <person name="Rocha E."/>
            <person name="Roche B."/>
            <person name="Rose M."/>
            <person name="Sadaie Y."/>
            <person name="Sato T."/>
            <person name="Scanlan E."/>
            <person name="Schleich S."/>
            <person name="Schroeter R."/>
            <person name="Scoffone F."/>
            <person name="Sekiguchi J."/>
            <person name="Sekowska A."/>
            <person name="Seror S.J."/>
            <person name="Serror P."/>
            <person name="Shin B.-S."/>
            <person name="Soldo B."/>
            <person name="Sorokin A."/>
            <person name="Tacconi E."/>
            <person name="Takagi T."/>
            <person name="Takahashi H."/>
            <person name="Takemaru K."/>
            <person name="Takeuchi M."/>
            <person name="Tamakoshi A."/>
            <person name="Tanaka T."/>
            <person name="Terpstra P."/>
            <person name="Tognoni A."/>
            <person name="Tosato V."/>
            <person name="Uchiyama S."/>
            <person name="Vandenbol M."/>
            <person name="Vannier F."/>
            <person name="Vassarotti A."/>
            <person name="Viari A."/>
            <person name="Wambutt R."/>
            <person name="Wedler E."/>
            <person name="Wedler H."/>
            <person name="Weitzenegger T."/>
            <person name="Winters P."/>
            <person name="Wipat A."/>
            <person name="Yamamoto H."/>
            <person name="Yamane K."/>
            <person name="Yasumoto K."/>
            <person name="Yata K."/>
            <person name="Yoshida K."/>
            <person name="Yoshikawa H.-F."/>
            <person name="Zumstein E."/>
            <person name="Yoshikawa H."/>
            <person name="Danchin A."/>
        </authorList>
    </citation>
    <scope>NUCLEOTIDE SEQUENCE [LARGE SCALE GENOMIC DNA]</scope>
    <source>
        <strain>168</strain>
    </source>
</reference>
<gene>
    <name type="primary">maa</name>
    <name type="synonym">yyaI</name>
    <name type="ordered locus">BSU40850</name>
</gene>
<keyword id="KW-1185">Reference proteome</keyword>
<keyword id="KW-0677">Repeat</keyword>
<keyword id="KW-0808">Transferase</keyword>
<dbReference type="EC" id="2.3.1.79"/>
<dbReference type="EMBL" id="D26185">
    <property type="protein sequence ID" value="BAA05215.1"/>
    <property type="molecule type" value="Genomic_DNA"/>
</dbReference>
<dbReference type="EMBL" id="L16865">
    <property type="protein sequence ID" value="AAA64343.1"/>
    <property type="molecule type" value="Genomic_DNA"/>
</dbReference>
<dbReference type="EMBL" id="AL009126">
    <property type="protein sequence ID" value="CAB16122.1"/>
    <property type="molecule type" value="Genomic_DNA"/>
</dbReference>
<dbReference type="PIR" id="I39920">
    <property type="entry name" value="I39920"/>
</dbReference>
<dbReference type="RefSeq" id="NP_391965.1">
    <property type="nucleotide sequence ID" value="NC_000964.3"/>
</dbReference>
<dbReference type="RefSeq" id="WP_003242928.1">
    <property type="nucleotide sequence ID" value="NZ_OZ025638.1"/>
</dbReference>
<dbReference type="SMR" id="P37515"/>
<dbReference type="FunCoup" id="P37515">
    <property type="interactions" value="164"/>
</dbReference>
<dbReference type="STRING" id="224308.BSU40850"/>
<dbReference type="PaxDb" id="224308-BSU40850"/>
<dbReference type="EnsemblBacteria" id="CAB16122">
    <property type="protein sequence ID" value="CAB16122"/>
    <property type="gene ID" value="BSU_40850"/>
</dbReference>
<dbReference type="GeneID" id="937913"/>
<dbReference type="KEGG" id="bsu:BSU40850"/>
<dbReference type="PATRIC" id="fig|224308.179.peg.4426"/>
<dbReference type="eggNOG" id="COG0110">
    <property type="taxonomic scope" value="Bacteria"/>
</dbReference>
<dbReference type="InParanoid" id="P37515"/>
<dbReference type="OrthoDB" id="9812571at2"/>
<dbReference type="PhylomeDB" id="P37515"/>
<dbReference type="BioCyc" id="BSUB:BSU40850-MONOMER"/>
<dbReference type="BRENDA" id="2.3.1.79">
    <property type="organism ID" value="658"/>
</dbReference>
<dbReference type="Proteomes" id="UP000001570">
    <property type="component" value="Chromosome"/>
</dbReference>
<dbReference type="GO" id="GO:0008925">
    <property type="term" value="F:maltose O-acetyltransferase activity"/>
    <property type="evidence" value="ECO:0007669"/>
    <property type="project" value="UniProtKB-EC"/>
</dbReference>
<dbReference type="GO" id="GO:0008374">
    <property type="term" value="F:O-acyltransferase activity"/>
    <property type="evidence" value="ECO:0000318"/>
    <property type="project" value="GO_Central"/>
</dbReference>
<dbReference type="CDD" id="cd03357">
    <property type="entry name" value="LbH_MAT_GAT"/>
    <property type="match status" value="1"/>
</dbReference>
<dbReference type="FunFam" id="2.160.10.10:FF:000008">
    <property type="entry name" value="Maltose O-acetyltransferase"/>
    <property type="match status" value="1"/>
</dbReference>
<dbReference type="Gene3D" id="2.160.10.10">
    <property type="entry name" value="Hexapeptide repeat proteins"/>
    <property type="match status" value="1"/>
</dbReference>
<dbReference type="InterPro" id="IPR001451">
    <property type="entry name" value="Hexapep"/>
</dbReference>
<dbReference type="InterPro" id="IPR018357">
    <property type="entry name" value="Hexapep_transf_CS"/>
</dbReference>
<dbReference type="InterPro" id="IPR051159">
    <property type="entry name" value="Hexapeptide_acetyltransf"/>
</dbReference>
<dbReference type="InterPro" id="IPR024688">
    <property type="entry name" value="Mac_dom"/>
</dbReference>
<dbReference type="InterPro" id="IPR011004">
    <property type="entry name" value="Trimer_LpxA-like_sf"/>
</dbReference>
<dbReference type="PANTHER" id="PTHR23416:SF23">
    <property type="entry name" value="ACETYLTRANSFERASE C18B11.09C-RELATED"/>
    <property type="match status" value="1"/>
</dbReference>
<dbReference type="PANTHER" id="PTHR23416">
    <property type="entry name" value="SIALIC ACID SYNTHASE-RELATED"/>
    <property type="match status" value="1"/>
</dbReference>
<dbReference type="Pfam" id="PF00132">
    <property type="entry name" value="Hexapep"/>
    <property type="match status" value="1"/>
</dbReference>
<dbReference type="Pfam" id="PF12464">
    <property type="entry name" value="Mac"/>
    <property type="match status" value="1"/>
</dbReference>
<dbReference type="SMART" id="SM01266">
    <property type="entry name" value="Mac"/>
    <property type="match status" value="1"/>
</dbReference>
<dbReference type="SUPFAM" id="SSF51161">
    <property type="entry name" value="Trimeric LpxA-like enzymes"/>
    <property type="match status" value="1"/>
</dbReference>
<dbReference type="PROSITE" id="PS00101">
    <property type="entry name" value="HEXAPEP_TRANSFERASES"/>
    <property type="match status" value="1"/>
</dbReference>
<accession>P37515</accession>
<name>MAA_BACSU</name>
<evidence type="ECO:0000250" key="1">
    <source>
        <dbReference type="UniProtKB" id="P07464"/>
    </source>
</evidence>
<evidence type="ECO:0000250" key="2">
    <source>
        <dbReference type="UniProtKB" id="P77791"/>
    </source>
</evidence>
<evidence type="ECO:0000305" key="3"/>
<feature type="chain" id="PRO_0000068730" description="Probable maltose O-acetyltransferase">
    <location>
        <begin position="1"/>
        <end position="184"/>
    </location>
</feature>
<feature type="active site" description="Proton donor/acceptor" evidence="1">
    <location>
        <position position="114"/>
    </location>
</feature>
<feature type="binding site" description="in other chain" evidence="1">
    <location>
        <position position="84"/>
    </location>
    <ligand>
        <name>acetyl-CoA</name>
        <dbReference type="ChEBI" id="CHEBI:57288"/>
        <note>ligand shared between dimeric partners</note>
    </ligand>
</feature>
<feature type="binding site" description="in other chain" evidence="1">
    <location>
        <position position="141"/>
    </location>
    <ligand>
        <name>acetyl-CoA</name>
        <dbReference type="ChEBI" id="CHEBI:57288"/>
        <note>ligand shared between dimeric partners</note>
    </ligand>
</feature>
<feature type="binding site" description="in other chain" evidence="1">
    <location>
        <position position="159"/>
    </location>
    <ligand>
        <name>acetyl-CoA</name>
        <dbReference type="ChEBI" id="CHEBI:57288"/>
        <note>ligand shared between dimeric partners</note>
    </ligand>
</feature>
<feature type="binding site" evidence="1">
    <location>
        <begin position="164"/>
        <end position="165"/>
    </location>
    <ligand>
        <name>acetyl-CoA</name>
        <dbReference type="ChEBI" id="CHEBI:57288"/>
        <note>ligand shared between dimeric partners</note>
    </ligand>
</feature>
<feature type="binding site" evidence="1">
    <location>
        <position position="179"/>
    </location>
    <ligand>
        <name>acetyl-CoA</name>
        <dbReference type="ChEBI" id="CHEBI:57288"/>
        <note>ligand shared between dimeric partners</note>
    </ligand>
</feature>
<feature type="binding site" description="in other chain" evidence="1">
    <location>
        <position position="182"/>
    </location>
    <ligand>
        <name>acetyl-CoA</name>
        <dbReference type="ChEBI" id="CHEBI:57288"/>
        <note>ligand shared between dimeric partners</note>
    </ligand>
</feature>
<feature type="site" description="Transition state stabilizer" evidence="1">
    <location>
        <position position="84"/>
    </location>
</feature>
<proteinExistence type="inferred from homology"/>
<protein>
    <recommendedName>
        <fullName>Probable maltose O-acetyltransferase</fullName>
        <ecNumber>2.3.1.79</ecNumber>
    </recommendedName>
    <alternativeName>
        <fullName>Maltose transacetylase</fullName>
    </alternativeName>
</protein>